<sequence length="312" mass="33498">MTIKRKKVSVIGAGFTGATTAFLLAQKELADVVLVDIPQLENPTKGKALDMLEASPVQGFDANIIGTSDYADTADSDVVVITAGIARKPGMSRDDLVATNSKIMKSITRDIAKHSPNAIIVVLTNPVDAMTYSVFKEAGFPKERVIGQSGVLDTARFRTFIAQELNLSVKDITGFVLGGHGDDMVPLVRYSYAGGIPLETLIPKERLEAIVERTRKGGGEIVGLLGNGSAYYAPAASLVEMTEAILKDQRRVLPAIAYLEGEYGYSDLYLGVPVILGGNGIEKIIELELLADEKEALDRSVESVRNVMKVLV</sequence>
<reference key="1">
    <citation type="submission" date="2009-04" db="EMBL/GenBank/DDBJ databases">
        <title>Genome sequence of Bacillus anthracis A0248.</title>
        <authorList>
            <person name="Dodson R.J."/>
            <person name="Munk A.C."/>
            <person name="Bruce D."/>
            <person name="Detter C."/>
            <person name="Tapia R."/>
            <person name="Sutton G."/>
            <person name="Sims D."/>
            <person name="Brettin T."/>
        </authorList>
    </citation>
    <scope>NUCLEOTIDE SEQUENCE [LARGE SCALE GENOMIC DNA]</scope>
    <source>
        <strain>A0248</strain>
    </source>
</reference>
<comment type="function">
    <text evidence="1">Catalyzes the reversible oxidation of malate to oxaloacetate.</text>
</comment>
<comment type="catalytic activity">
    <reaction evidence="1">
        <text>(S)-malate + NAD(+) = oxaloacetate + NADH + H(+)</text>
        <dbReference type="Rhea" id="RHEA:21432"/>
        <dbReference type="ChEBI" id="CHEBI:15378"/>
        <dbReference type="ChEBI" id="CHEBI:15589"/>
        <dbReference type="ChEBI" id="CHEBI:16452"/>
        <dbReference type="ChEBI" id="CHEBI:57540"/>
        <dbReference type="ChEBI" id="CHEBI:57945"/>
        <dbReference type="EC" id="1.1.1.37"/>
    </reaction>
</comment>
<comment type="similarity">
    <text evidence="1">Belongs to the LDH/MDH superfamily. MDH type 3 family.</text>
</comment>
<accession>C3PAI1</accession>
<keyword id="KW-0520">NAD</keyword>
<keyword id="KW-0560">Oxidoreductase</keyword>
<keyword id="KW-0597">Phosphoprotein</keyword>
<keyword id="KW-0816">Tricarboxylic acid cycle</keyword>
<gene>
    <name evidence="1" type="primary">mdh</name>
    <name type="ordered locus">BAA_4848</name>
</gene>
<name>MDH_BACAA</name>
<organism>
    <name type="scientific">Bacillus anthracis (strain A0248)</name>
    <dbReference type="NCBI Taxonomy" id="592021"/>
    <lineage>
        <taxon>Bacteria</taxon>
        <taxon>Bacillati</taxon>
        <taxon>Bacillota</taxon>
        <taxon>Bacilli</taxon>
        <taxon>Bacillales</taxon>
        <taxon>Bacillaceae</taxon>
        <taxon>Bacillus</taxon>
        <taxon>Bacillus cereus group</taxon>
    </lineage>
</organism>
<evidence type="ECO:0000255" key="1">
    <source>
        <dbReference type="HAMAP-Rule" id="MF_00487"/>
    </source>
</evidence>
<dbReference type="EC" id="1.1.1.37" evidence="1"/>
<dbReference type="EMBL" id="CP001598">
    <property type="protein sequence ID" value="ACQ47759.1"/>
    <property type="molecule type" value="Genomic_DNA"/>
</dbReference>
<dbReference type="RefSeq" id="WP_000153232.1">
    <property type="nucleotide sequence ID" value="NC_012659.1"/>
</dbReference>
<dbReference type="SMR" id="C3PAI1"/>
<dbReference type="GeneID" id="93006518"/>
<dbReference type="KEGG" id="bai:BAA_4848"/>
<dbReference type="HOGENOM" id="CLU_045401_2_1_9"/>
<dbReference type="GO" id="GO:0004459">
    <property type="term" value="F:L-lactate dehydrogenase activity"/>
    <property type="evidence" value="ECO:0007669"/>
    <property type="project" value="TreeGrafter"/>
</dbReference>
<dbReference type="GO" id="GO:0030060">
    <property type="term" value="F:L-malate dehydrogenase (NAD+) activity"/>
    <property type="evidence" value="ECO:0007669"/>
    <property type="project" value="UniProtKB-UniRule"/>
</dbReference>
<dbReference type="GO" id="GO:0006089">
    <property type="term" value="P:lactate metabolic process"/>
    <property type="evidence" value="ECO:0007669"/>
    <property type="project" value="TreeGrafter"/>
</dbReference>
<dbReference type="GO" id="GO:0006099">
    <property type="term" value="P:tricarboxylic acid cycle"/>
    <property type="evidence" value="ECO:0007669"/>
    <property type="project" value="UniProtKB-UniRule"/>
</dbReference>
<dbReference type="CDD" id="cd01339">
    <property type="entry name" value="LDH-like_MDH"/>
    <property type="match status" value="1"/>
</dbReference>
<dbReference type="FunFam" id="3.40.50.720:FF:000018">
    <property type="entry name" value="Malate dehydrogenase"/>
    <property type="match status" value="1"/>
</dbReference>
<dbReference type="FunFam" id="3.90.110.10:FF:000004">
    <property type="entry name" value="Malate dehydrogenase"/>
    <property type="match status" value="1"/>
</dbReference>
<dbReference type="Gene3D" id="3.90.110.10">
    <property type="entry name" value="Lactate dehydrogenase/glycoside hydrolase, family 4, C-terminal"/>
    <property type="match status" value="1"/>
</dbReference>
<dbReference type="Gene3D" id="3.40.50.720">
    <property type="entry name" value="NAD(P)-binding Rossmann-like Domain"/>
    <property type="match status" value="1"/>
</dbReference>
<dbReference type="HAMAP" id="MF_00487">
    <property type="entry name" value="Malate_dehydrog_3"/>
    <property type="match status" value="1"/>
</dbReference>
<dbReference type="InterPro" id="IPR001557">
    <property type="entry name" value="L-lactate/malate_DH"/>
</dbReference>
<dbReference type="InterPro" id="IPR022383">
    <property type="entry name" value="Lactate/malate_DH_C"/>
</dbReference>
<dbReference type="InterPro" id="IPR001236">
    <property type="entry name" value="Lactate/malate_DH_N"/>
</dbReference>
<dbReference type="InterPro" id="IPR015955">
    <property type="entry name" value="Lactate_DH/Glyco_Ohase_4_C"/>
</dbReference>
<dbReference type="InterPro" id="IPR011275">
    <property type="entry name" value="Malate_DH_type3"/>
</dbReference>
<dbReference type="InterPro" id="IPR036291">
    <property type="entry name" value="NAD(P)-bd_dom_sf"/>
</dbReference>
<dbReference type="NCBIfam" id="TIGR01763">
    <property type="entry name" value="MalateDH_bact"/>
    <property type="match status" value="1"/>
</dbReference>
<dbReference type="NCBIfam" id="NF004863">
    <property type="entry name" value="PRK06223.1"/>
    <property type="match status" value="1"/>
</dbReference>
<dbReference type="PANTHER" id="PTHR43128">
    <property type="entry name" value="L-2-HYDROXYCARBOXYLATE DEHYDROGENASE (NAD(P)(+))"/>
    <property type="match status" value="1"/>
</dbReference>
<dbReference type="PANTHER" id="PTHR43128:SF16">
    <property type="entry name" value="L-LACTATE DEHYDROGENASE"/>
    <property type="match status" value="1"/>
</dbReference>
<dbReference type="Pfam" id="PF02866">
    <property type="entry name" value="Ldh_1_C"/>
    <property type="match status" value="1"/>
</dbReference>
<dbReference type="Pfam" id="PF00056">
    <property type="entry name" value="Ldh_1_N"/>
    <property type="match status" value="1"/>
</dbReference>
<dbReference type="PIRSF" id="PIRSF000102">
    <property type="entry name" value="Lac_mal_DH"/>
    <property type="match status" value="1"/>
</dbReference>
<dbReference type="PRINTS" id="PR00086">
    <property type="entry name" value="LLDHDRGNASE"/>
</dbReference>
<dbReference type="SUPFAM" id="SSF56327">
    <property type="entry name" value="LDH C-terminal domain-like"/>
    <property type="match status" value="1"/>
</dbReference>
<dbReference type="SUPFAM" id="SSF51735">
    <property type="entry name" value="NAD(P)-binding Rossmann-fold domains"/>
    <property type="match status" value="1"/>
</dbReference>
<protein>
    <recommendedName>
        <fullName evidence="1">Malate dehydrogenase</fullName>
        <ecNumber evidence="1">1.1.1.37</ecNumber>
    </recommendedName>
</protein>
<feature type="chain" id="PRO_1000191640" description="Malate dehydrogenase">
    <location>
        <begin position="1"/>
        <end position="312"/>
    </location>
</feature>
<feature type="active site" description="Proton acceptor" evidence="1">
    <location>
        <position position="180"/>
    </location>
</feature>
<feature type="binding site" evidence="1">
    <location>
        <begin position="12"/>
        <end position="17"/>
    </location>
    <ligand>
        <name>NAD(+)</name>
        <dbReference type="ChEBI" id="CHEBI:57540"/>
    </ligand>
</feature>
<feature type="binding site" evidence="1">
    <location>
        <position position="36"/>
    </location>
    <ligand>
        <name>NAD(+)</name>
        <dbReference type="ChEBI" id="CHEBI:57540"/>
    </ligand>
</feature>
<feature type="binding site" evidence="1">
    <location>
        <position position="87"/>
    </location>
    <ligand>
        <name>substrate</name>
    </ligand>
</feature>
<feature type="binding site" evidence="1">
    <location>
        <position position="93"/>
    </location>
    <ligand>
        <name>substrate</name>
    </ligand>
</feature>
<feature type="binding site" evidence="1">
    <location>
        <position position="100"/>
    </location>
    <ligand>
        <name>NAD(+)</name>
        <dbReference type="ChEBI" id="CHEBI:57540"/>
    </ligand>
</feature>
<feature type="binding site" evidence="1">
    <location>
        <begin position="123"/>
        <end position="125"/>
    </location>
    <ligand>
        <name>NAD(+)</name>
        <dbReference type="ChEBI" id="CHEBI:57540"/>
    </ligand>
</feature>
<feature type="binding site" evidence="1">
    <location>
        <position position="125"/>
    </location>
    <ligand>
        <name>substrate</name>
    </ligand>
</feature>
<feature type="binding site" evidence="1">
    <location>
        <position position="156"/>
    </location>
    <ligand>
        <name>substrate</name>
    </ligand>
</feature>
<feature type="modified residue" description="Phosphoserine" evidence="1">
    <location>
        <position position="149"/>
    </location>
</feature>
<proteinExistence type="inferred from homology"/>